<evidence type="ECO:0000250" key="1"/>
<evidence type="ECO:0000250" key="2">
    <source>
        <dbReference type="UniProtKB" id="O35613"/>
    </source>
</evidence>
<evidence type="ECO:0000250" key="3">
    <source>
        <dbReference type="UniProtKB" id="Q8VIB2"/>
    </source>
</evidence>
<evidence type="ECO:0000250" key="4">
    <source>
        <dbReference type="UniProtKB" id="Q9UER7"/>
    </source>
</evidence>
<evidence type="ECO:0000255" key="5"/>
<evidence type="ECO:0000256" key="6">
    <source>
        <dbReference type="SAM" id="MobiDB-lite"/>
    </source>
</evidence>
<evidence type="ECO:0000305" key="7"/>
<dbReference type="EMBL" id="AJ630366">
    <property type="protein sequence ID" value="CAI11447.1"/>
    <property type="molecule type" value="Genomic_DNA"/>
</dbReference>
<dbReference type="RefSeq" id="XP_038539111.1">
    <property type="nucleotide sequence ID" value="XM_038683183.1"/>
</dbReference>
<dbReference type="RefSeq" id="XP_038539112.1">
    <property type="nucleotide sequence ID" value="XM_038683184.1"/>
</dbReference>
<dbReference type="RefSeq" id="XP_038539113.1">
    <property type="nucleotide sequence ID" value="XM_038683185.1"/>
</dbReference>
<dbReference type="RefSeq" id="XP_038539114.1">
    <property type="nucleotide sequence ID" value="XM_038683186.1"/>
</dbReference>
<dbReference type="RefSeq" id="XP_038539115.1">
    <property type="nucleotide sequence ID" value="XM_038683187.1"/>
</dbReference>
<dbReference type="RefSeq" id="XP_038539116.1">
    <property type="nucleotide sequence ID" value="XM_038683188.1"/>
</dbReference>
<dbReference type="SMR" id="Q5TJE1"/>
<dbReference type="FunCoup" id="Q5TJE1">
    <property type="interactions" value="310"/>
</dbReference>
<dbReference type="STRING" id="9615.ENSCAFP00000048726"/>
<dbReference type="PaxDb" id="9612-ENSCAFP00000001395"/>
<dbReference type="Ensembl" id="ENSCAFT00845038086.1">
    <property type="protein sequence ID" value="ENSCAFP00845029838.1"/>
    <property type="gene ID" value="ENSCAFG00845021574.1"/>
</dbReference>
<dbReference type="GeneID" id="474873"/>
<dbReference type="VEuPathDB" id="HostDB:ENSCAFG00845021574"/>
<dbReference type="eggNOG" id="ENOG502QRS6">
    <property type="taxonomic scope" value="Eukaryota"/>
</dbReference>
<dbReference type="GeneTree" id="ENSGT00390000009448"/>
<dbReference type="InParanoid" id="Q5TJE1"/>
<dbReference type="OrthoDB" id="7492809at2759"/>
<dbReference type="Reactome" id="R-CFA-6804757">
    <property type="pathway name" value="Regulation of TP53 Degradation"/>
</dbReference>
<dbReference type="Reactome" id="R-CFA-9670095">
    <property type="pathway name" value="Inhibition of DNA recombination at telomere"/>
</dbReference>
<dbReference type="Proteomes" id="UP000002254">
    <property type="component" value="Unplaced"/>
</dbReference>
<dbReference type="Proteomes" id="UP000694429">
    <property type="component" value="Unplaced"/>
</dbReference>
<dbReference type="Proteomes" id="UP000694542">
    <property type="component" value="Unplaced"/>
</dbReference>
<dbReference type="Proteomes" id="UP000805418">
    <property type="component" value="Chromosome 12"/>
</dbReference>
<dbReference type="GO" id="GO:0000775">
    <property type="term" value="C:chromosome, centromeric region"/>
    <property type="evidence" value="ECO:0007669"/>
    <property type="project" value="UniProtKB-SubCell"/>
</dbReference>
<dbReference type="GO" id="GO:0005829">
    <property type="term" value="C:cytosol"/>
    <property type="evidence" value="ECO:0000250"/>
    <property type="project" value="UniProtKB"/>
</dbReference>
<dbReference type="GO" id="GO:0005730">
    <property type="term" value="C:nucleolus"/>
    <property type="evidence" value="ECO:0007669"/>
    <property type="project" value="UniProtKB-SubCell"/>
</dbReference>
<dbReference type="GO" id="GO:0005634">
    <property type="term" value="C:nucleus"/>
    <property type="evidence" value="ECO:0000250"/>
    <property type="project" value="UniProtKB"/>
</dbReference>
<dbReference type="GO" id="GO:0016605">
    <property type="term" value="C:PML body"/>
    <property type="evidence" value="ECO:0000250"/>
    <property type="project" value="UniProtKB"/>
</dbReference>
<dbReference type="GO" id="GO:0042393">
    <property type="term" value="F:histone binding"/>
    <property type="evidence" value="ECO:0000318"/>
    <property type="project" value="GO_Central"/>
</dbReference>
<dbReference type="GO" id="GO:0050681">
    <property type="term" value="F:nuclear androgen receptor binding"/>
    <property type="evidence" value="ECO:0000318"/>
    <property type="project" value="GO_Central"/>
</dbReference>
<dbReference type="GO" id="GO:0002039">
    <property type="term" value="F:p53 binding"/>
    <property type="evidence" value="ECO:0007669"/>
    <property type="project" value="Ensembl"/>
</dbReference>
<dbReference type="GO" id="GO:0042803">
    <property type="term" value="F:protein homodimerization activity"/>
    <property type="evidence" value="ECO:0000250"/>
    <property type="project" value="UniProtKB"/>
</dbReference>
<dbReference type="GO" id="GO:0030295">
    <property type="term" value="F:protein kinase activator activity"/>
    <property type="evidence" value="ECO:0007669"/>
    <property type="project" value="Ensembl"/>
</dbReference>
<dbReference type="GO" id="GO:0019901">
    <property type="term" value="F:protein kinase binding"/>
    <property type="evidence" value="ECO:0007669"/>
    <property type="project" value="Ensembl"/>
</dbReference>
<dbReference type="GO" id="GO:0061629">
    <property type="term" value="F:RNA polymerase II-specific DNA-binding transcription factor binding"/>
    <property type="evidence" value="ECO:0000250"/>
    <property type="project" value="UniProtKB"/>
</dbReference>
<dbReference type="GO" id="GO:0003713">
    <property type="term" value="F:transcription coactivator activity"/>
    <property type="evidence" value="ECO:0000250"/>
    <property type="project" value="UniProtKB"/>
</dbReference>
<dbReference type="GO" id="GO:0003714">
    <property type="term" value="F:transcription corepressor activity"/>
    <property type="evidence" value="ECO:0000318"/>
    <property type="project" value="GO_Central"/>
</dbReference>
<dbReference type="GO" id="GO:0140416">
    <property type="term" value="F:transcription regulator inhibitor activity"/>
    <property type="evidence" value="ECO:0007669"/>
    <property type="project" value="Ensembl"/>
</dbReference>
<dbReference type="GO" id="GO:0031625">
    <property type="term" value="F:ubiquitin protein ligase binding"/>
    <property type="evidence" value="ECO:0007669"/>
    <property type="project" value="Ensembl"/>
</dbReference>
<dbReference type="GO" id="GO:0030521">
    <property type="term" value="P:androgen receptor signaling pathway"/>
    <property type="evidence" value="ECO:0007669"/>
    <property type="project" value="Ensembl"/>
</dbReference>
<dbReference type="GO" id="GO:0071276">
    <property type="term" value="P:cellular response to cadmium ion"/>
    <property type="evidence" value="ECO:0000250"/>
    <property type="project" value="UniProtKB"/>
</dbReference>
<dbReference type="GO" id="GO:0071280">
    <property type="term" value="P:cellular response to copper ion"/>
    <property type="evidence" value="ECO:0000250"/>
    <property type="project" value="UniProtKB"/>
</dbReference>
<dbReference type="GO" id="GO:0072738">
    <property type="term" value="P:cellular response to diamide"/>
    <property type="evidence" value="ECO:0000250"/>
    <property type="project" value="UniProtKB"/>
</dbReference>
<dbReference type="GO" id="GO:0034605">
    <property type="term" value="P:cellular response to heat"/>
    <property type="evidence" value="ECO:0000250"/>
    <property type="project" value="UniProtKB"/>
</dbReference>
<dbReference type="GO" id="GO:1903936">
    <property type="term" value="P:cellular response to sodium arsenite"/>
    <property type="evidence" value="ECO:0000250"/>
    <property type="project" value="UniProtKB"/>
</dbReference>
<dbReference type="GO" id="GO:0034620">
    <property type="term" value="P:cellular response to unfolded protein"/>
    <property type="evidence" value="ECO:0000250"/>
    <property type="project" value="UniProtKB"/>
</dbReference>
<dbReference type="GO" id="GO:0008625">
    <property type="term" value="P:extrinsic apoptotic signaling pathway via death domain receptors"/>
    <property type="evidence" value="ECO:0007669"/>
    <property type="project" value="Ensembl"/>
</dbReference>
<dbReference type="GO" id="GO:0007254">
    <property type="term" value="P:JNK cascade"/>
    <property type="evidence" value="ECO:0007669"/>
    <property type="project" value="Ensembl"/>
</dbReference>
<dbReference type="GO" id="GO:0045892">
    <property type="term" value="P:negative regulation of DNA-templated transcription"/>
    <property type="evidence" value="ECO:0000318"/>
    <property type="project" value="GO_Central"/>
</dbReference>
<dbReference type="GO" id="GO:0010629">
    <property type="term" value="P:negative regulation of gene expression"/>
    <property type="evidence" value="ECO:0000250"/>
    <property type="project" value="UniProtKB"/>
</dbReference>
<dbReference type="GO" id="GO:0036480">
    <property type="term" value="P:neuron intrinsic apoptotic signaling pathway in response to oxidative stress"/>
    <property type="evidence" value="ECO:0007669"/>
    <property type="project" value="Ensembl"/>
</dbReference>
<dbReference type="GO" id="GO:0006334">
    <property type="term" value="P:nucleosome assembly"/>
    <property type="evidence" value="ECO:0000318"/>
    <property type="project" value="GO_Central"/>
</dbReference>
<dbReference type="GO" id="GO:0042981">
    <property type="term" value="P:regulation of apoptotic process"/>
    <property type="evidence" value="ECO:0000318"/>
    <property type="project" value="GO_Central"/>
</dbReference>
<dbReference type="GO" id="GO:0031396">
    <property type="term" value="P:regulation of protein ubiquitination"/>
    <property type="evidence" value="ECO:0000250"/>
    <property type="project" value="UniProtKB"/>
</dbReference>
<dbReference type="CDD" id="cd13151">
    <property type="entry name" value="DAXX_helical_bundle"/>
    <property type="match status" value="1"/>
</dbReference>
<dbReference type="CDD" id="cd13150">
    <property type="entry name" value="DAXX_histone_binding"/>
    <property type="match status" value="1"/>
</dbReference>
<dbReference type="FunFam" id="1.10.8.810:FF:000001">
    <property type="entry name" value="Death domain-associated protein 6"/>
    <property type="match status" value="1"/>
</dbReference>
<dbReference type="FunFam" id="1.20.58.2170:FF:000001">
    <property type="entry name" value="Death domain-associated protein 6"/>
    <property type="match status" value="1"/>
</dbReference>
<dbReference type="Gene3D" id="1.20.58.2170">
    <property type="match status" value="1"/>
</dbReference>
<dbReference type="Gene3D" id="1.10.8.810">
    <property type="entry name" value="Daxx helical bundle domain"/>
    <property type="match status" value="1"/>
</dbReference>
<dbReference type="InterPro" id="IPR046378">
    <property type="entry name" value="DAXX_histone-bd"/>
</dbReference>
<dbReference type="InterPro" id="IPR046426">
    <property type="entry name" value="DAXX_histone-bd_sf"/>
</dbReference>
<dbReference type="InterPro" id="IPR031333">
    <property type="entry name" value="Daxx_N"/>
</dbReference>
<dbReference type="InterPro" id="IPR038298">
    <property type="entry name" value="Daxx_N_sf"/>
</dbReference>
<dbReference type="PANTHER" id="PTHR12766:SF7">
    <property type="entry name" value="DEATH DOMAIN-ASSOCIATED PROTEIN 6"/>
    <property type="match status" value="1"/>
</dbReference>
<dbReference type="PANTHER" id="PTHR12766">
    <property type="entry name" value="DEATH DOMAIN-ASSOCIATED PROTEIN 6 DAXX"/>
    <property type="match status" value="1"/>
</dbReference>
<dbReference type="Pfam" id="PF03344">
    <property type="entry name" value="Daxx"/>
    <property type="match status" value="1"/>
</dbReference>
<dbReference type="Pfam" id="PF20920">
    <property type="entry name" value="DAXX_hist_bd"/>
    <property type="match status" value="1"/>
</dbReference>
<comment type="function">
    <text evidence="1 4">Transcription corepressor known to repress transcriptional potential of several sumoylated transcription factors. Down-regulates basal and activated transcription. Its transcription repressor activity is modulated by recruiting it to subnuclear compartments like the nucleolus or PML/POD/ND10 nuclear bodies through interactions with MCSR1 and PML, respectively. Seems to regulate transcription in PML/POD/ND10 nuclear bodies together with PML and may influence TNFRSF6-dependent apoptosis thereby. Inhibits transcriptional activation of PAX3 and ETS1 through direct protein-protein interactions. Modulates PAX5 activity; the function seems to involve CREBBP. Acts as an adapter protein in a MDM2-DAXX-USP7 complex by regulating the RING-finger E3 ligase MDM2 ubiquitination activity. Under non-stress condition, in association with the deubiquitinating USP7, prevents MDM2 self-ubiquitination and enhances the intrinsic E3 ligase activity of MDM2 towards TP53, thereby promoting TP53 ubiquitination and subsequent proteasomal degradation. Upon DNA damage, its association with MDM2 and USP7 is disrupted, resulting in increased MDM2 autoubiquitination and consequently, MDM2 degradation, which leads to TP53 stabilization. Acts as a histone chaperone that facilitates deposition of histone H3.3. Acts as a targeting component of the chromatin remodeling complex ATRX:DAXX which has ATP-dependent DNA translocase activity and catalyzes the replication-independent deposition of histone H3.3 in pericentric DNA repeats outside S-phase and telomeres, and the in vitro remodeling of H3.3-containing nucleosomes. Does not affect the ATPase activity of ATRX but alleviates its transcription repression activity. Upon neuronal activation associates with regulatory elements of selected immediate early genes where it promotes deposition of histone H3.3 which may be linked to transcriptional induction of these genes. Required for the recruitment of histone H3.3:H4 dimers to PML-nuclear bodies (PML-NBs); the process is independent of ATRX and facilitated by ASF1A; PML-NBs are suggested to function as regulatory sites for the incorporation of newly synthesized histone H3.3 into chromatin. Proposed to mediate activation of the JNK pathway and apoptosis via MAP3K5 in response to signaling from TNFRSF6 and TGFBR2. Interaction with HSPB1/HSP27 may prevent interaction with TNFRSF6 and MAP3K5 and block DAXX-mediated apoptosis. In contrast, in lymphoid cells JNC activation and TNFRSF6-mediated apoptosis may not involve DAXX (By similarity). Plays a role as a positive regulator of the heat shock transcription factor HSF1 activity during the stress protein response (By similarity).</text>
</comment>
<comment type="subunit">
    <text evidence="1 4">Homomultimer. Interacts (via C-terminus) with TNFRSF6 (via death domain). Interacts with PAX5, SLC2A4/GLUT4, MAP3K5, TGFBR2, phosphorylated dimeric HSPB1/HSP27, CENPC, ETS1, sumoylated PML, UBE2I, MCRS1 and TP53. Interacts (via N-terminus) with HIPK2 and HIPK3. Interacts with HIPK1, which induces translocation from PML/POD/ND10 nuclear bodies to chromatin and enhances association with HDAC1. Interacts (non-phosphorylated) with PAX3, PAX7, DEK, HDAC1, HDAC2, HDAC3, acetylated histone H4 and histones H2A, H2B, H3, H3.3 and H4. Interacts with SPOP; mediating CUL3-dependent proteasomal degradation. Interacts with CBP; the interaction is dependent the sumoylation of CBP and suppresses CBP transcriptional activity via recruitment of HDAC2 directly in the complex with TP53 and HIPK2. Interacts with AXIN1; the interaction stimulates the interaction of DAXX with TP53, stimulates 'Ser-46' phosphorylation of TP53 on and induces cell death on UV irradiation. Interacts with MDM2; the interaction is direct. Interacts with USP7; the interaction is direct and independent of MDM2 and TP53. Part of a complex with DAXX, MDM2 and USP7 under non-stress conditions. Interacts (via N-terminus) with RASSF1 (via C-terminus); the interaction is independent of MDM2 and TP53; RASSF1 isoform A disrupts interactions among MDM2, DAXX and USP7, thus contributing to the efficient activation of TP53 by promoting MDM2 self-ubiquitination in cell-cycle checkpoint control in response to DNA damage. Interacts with ATRX to form the chromatin remodeling complex ATRX:DAXX (By similarity). Interacts with HSF1 (via homotrimeric form preferentially); this interaction relieves homotrimeric HSF1 from repression of its transcriptional activity by HSP90-dependent multichaperone complex upon heat shock (By similarity).</text>
</comment>
<comment type="subcellular location">
    <subcellularLocation>
        <location evidence="4">Cytoplasm</location>
    </subcellularLocation>
    <subcellularLocation>
        <location evidence="4">Nucleus</location>
        <location evidence="4">Nucleoplasm</location>
    </subcellularLocation>
    <subcellularLocation>
        <location evidence="4">Nucleus</location>
        <location evidence="4">PML body</location>
    </subcellularLocation>
    <subcellularLocation>
        <location evidence="4">Nucleus</location>
        <location evidence="4">Nucleolus</location>
    </subcellularLocation>
    <subcellularLocation>
        <location evidence="4">Chromosome</location>
        <location evidence="4">Centromere</location>
    </subcellularLocation>
    <text evidence="4">Dispersed throughout the nucleoplasm, in PML/POD/ND10 nuclear bodies, and in nucleoli. Colocalizes with histone H3.3, ATRX, HIRA and ASF1A at PML-nuclear bodies. Colocalizes with a subset of interphase centromeres, but is absent from mitotic centromeres. Detected in cytoplasmic punctate structures. Translocates from the nucleus to the cytoplasm upon glucose deprivation or oxidative stress. Colocalizes with RASSF1 in the nucleus. Colocalizes with USP7 in nucleoplasma with accumulation in speckled structures.</text>
</comment>
<comment type="domain">
    <text evidence="1">The Sumo interaction motif mediates Sumo binding, and is required both for sumoylation and binding to sumoylated targets.</text>
</comment>
<comment type="PTM">
    <text evidence="1">Sumoylated with SUMO1 on multiple lysine residues.</text>
</comment>
<comment type="PTM">
    <text evidence="1">Polyubiquitinated; which is promoted by CUL3 and SPOP and results in proteasomal degradation. Ubiquitinated by MDM2; inducing its degradation. Deubiquitinated by USP7; leading to stabilize it (By similarity).</text>
</comment>
<comment type="similarity">
    <text evidence="7">Belongs to the DAXX family.</text>
</comment>
<protein>
    <recommendedName>
        <fullName>Death domain-associated protein 6</fullName>
    </recommendedName>
    <alternativeName>
        <fullName>Daxx</fullName>
    </alternativeName>
</protein>
<accession>Q5TJE1</accession>
<name>DAXX_CANLF</name>
<keyword id="KW-0007">Acetylation</keyword>
<keyword id="KW-0053">Apoptosis</keyword>
<keyword id="KW-0137">Centromere</keyword>
<keyword id="KW-0143">Chaperone</keyword>
<keyword id="KW-0156">Chromatin regulator</keyword>
<keyword id="KW-0158">Chromosome</keyword>
<keyword id="KW-0175">Coiled coil</keyword>
<keyword id="KW-0963">Cytoplasm</keyword>
<keyword id="KW-1017">Isopeptide bond</keyword>
<keyword id="KW-0539">Nucleus</keyword>
<keyword id="KW-0597">Phosphoprotein</keyword>
<keyword id="KW-1185">Reference proteome</keyword>
<keyword id="KW-0678">Repressor</keyword>
<keyword id="KW-0804">Transcription</keyword>
<keyword id="KW-0805">Transcription regulation</keyword>
<keyword id="KW-0832">Ubl conjugation</keyword>
<feature type="chain" id="PRO_0000151256" description="Death domain-associated protein 6">
    <location>
        <begin position="1"/>
        <end position="737"/>
    </location>
</feature>
<feature type="region of interest" description="Necessary for interaction with USP7 and ATRX" evidence="1">
    <location>
        <begin position="1"/>
        <end position="159"/>
    </location>
</feature>
<feature type="region of interest" description="Disordered" evidence="6">
    <location>
        <begin position="1"/>
        <end position="55"/>
    </location>
</feature>
<feature type="region of interest" description="Disordered" evidence="6">
    <location>
        <begin position="145"/>
        <end position="184"/>
    </location>
</feature>
<feature type="region of interest" description="Interaction with histone H3.3" evidence="1">
    <location>
        <begin position="182"/>
        <end position="417"/>
    </location>
</feature>
<feature type="region of interest" description="Necessary for interaction with USP7" evidence="1">
    <location>
        <begin position="346"/>
        <end position="567"/>
    </location>
</feature>
<feature type="region of interest" description="Disordered" evidence="6">
    <location>
        <begin position="382"/>
        <end position="556"/>
    </location>
</feature>
<feature type="region of interest" description="Disordered" evidence="6">
    <location>
        <begin position="569"/>
        <end position="719"/>
    </location>
</feature>
<feature type="region of interest" description="Interaction with SPOP" evidence="1">
    <location>
        <begin position="624"/>
        <end position="737"/>
    </location>
</feature>
<feature type="region of interest" description="Sumo interaction motif (SIM)" evidence="1">
    <location>
        <begin position="730"/>
        <end position="737"/>
    </location>
</feature>
<feature type="coiled-coil region" evidence="5">
    <location>
        <begin position="179"/>
        <end position="216"/>
    </location>
</feature>
<feature type="coiled-coil region" evidence="5">
    <location>
        <begin position="432"/>
        <end position="474"/>
    </location>
</feature>
<feature type="short sequence motif" description="Nuclear localization signal" evidence="5">
    <location>
        <begin position="390"/>
        <end position="394"/>
    </location>
</feature>
<feature type="short sequence motif" description="Nuclear localization signal" evidence="5">
    <location>
        <begin position="626"/>
        <end position="632"/>
    </location>
</feature>
<feature type="compositionally biased region" description="Low complexity" evidence="6">
    <location>
        <begin position="33"/>
        <end position="45"/>
    </location>
</feature>
<feature type="compositionally biased region" description="Polar residues" evidence="6">
    <location>
        <begin position="149"/>
        <end position="175"/>
    </location>
</feature>
<feature type="compositionally biased region" description="Polar residues" evidence="6">
    <location>
        <begin position="422"/>
        <end position="432"/>
    </location>
</feature>
<feature type="compositionally biased region" description="Acidic residues" evidence="6">
    <location>
        <begin position="435"/>
        <end position="489"/>
    </location>
</feature>
<feature type="compositionally biased region" description="Polar residues" evidence="6">
    <location>
        <begin position="517"/>
        <end position="527"/>
    </location>
</feature>
<feature type="compositionally biased region" description="Low complexity" evidence="6">
    <location>
        <begin position="528"/>
        <end position="547"/>
    </location>
</feature>
<feature type="compositionally biased region" description="Basic and acidic residues" evidence="6">
    <location>
        <begin position="579"/>
        <end position="592"/>
    </location>
</feature>
<feature type="compositionally biased region" description="Basic and acidic residues" evidence="6">
    <location>
        <begin position="647"/>
        <end position="657"/>
    </location>
</feature>
<feature type="compositionally biased region" description="Polar residues" evidence="6">
    <location>
        <begin position="678"/>
        <end position="713"/>
    </location>
</feature>
<feature type="modified residue" description="Phosphoserine" evidence="4">
    <location>
        <position position="25"/>
    </location>
</feature>
<feature type="modified residue" description="Phosphoserine" evidence="4">
    <location>
        <position position="212"/>
    </location>
</feature>
<feature type="modified residue" description="Phosphoserine" evidence="4">
    <location>
        <position position="412"/>
    </location>
</feature>
<feature type="modified residue" description="Phosphoserine" evidence="4">
    <location>
        <position position="424"/>
    </location>
</feature>
<feature type="modified residue" description="Phosphothreonine" evidence="2">
    <location>
        <position position="459"/>
    </location>
</feature>
<feature type="modified residue" description="Phosphoserine" evidence="4">
    <location>
        <position position="494"/>
    </location>
</feature>
<feature type="modified residue" description="Phosphoserine" evidence="3">
    <location>
        <position position="497"/>
    </location>
</feature>
<feature type="modified residue" description="N6-acetyllysine" evidence="4">
    <location>
        <position position="511"/>
    </location>
</feature>
<feature type="modified residue" description="Phosphoserine" evidence="3">
    <location>
        <position position="558"/>
    </location>
</feature>
<feature type="modified residue" description="Phosphoserine" evidence="3">
    <location>
        <position position="578"/>
    </location>
</feature>
<feature type="modified residue" description="Phosphoserine" evidence="4">
    <location>
        <position position="665"/>
    </location>
</feature>
<feature type="modified residue" description="Phosphoserine" evidence="4">
    <location>
        <position position="668"/>
    </location>
</feature>
<feature type="modified residue" description="Phosphoserine" evidence="4">
    <location>
        <position position="685"/>
    </location>
</feature>
<feature type="modified residue" description="Phosphoserine" evidence="4">
    <location>
        <position position="699"/>
    </location>
</feature>
<feature type="modified residue" description="Phosphoserine" evidence="4">
    <location>
        <position position="734"/>
    </location>
</feature>
<feature type="modified residue" description="Phosphoserine" evidence="4">
    <location>
        <position position="736"/>
    </location>
</feature>
<feature type="cross-link" description="Glycyl lysine isopeptide (Lys-Gly) (interchain with G-Cter in SUMO2)" evidence="4">
    <location>
        <position position="142"/>
    </location>
</feature>
<feature type="cross-link" description="Glycyl lysine isopeptide (Lys-Gly) (interchain with G-Cter in SUMO1)" evidence="4">
    <location>
        <position position="628"/>
    </location>
</feature>
<feature type="cross-link" description="Glycyl lysine isopeptide (Lys-Gly) (interchain with G-Cter in SUMO1)" evidence="4">
    <location>
        <position position="629"/>
    </location>
</feature>
<gene>
    <name type="primary">DAXX</name>
</gene>
<sequence length="737" mass="81479">MATANSIIVLDDDDEDEAAAQPGPSHPPPNPASPQAEAPGSSQPHGAGGSSSSGGKKCYKLENEKLFEEFLELCKMQTADHPEVVPFLYNRQQRAHSLFLASAEFCNILSRVLSRAQSRPAKLYVYINELCTVLKAHSAKKKLNLAPAATSSEPSGNNPPTDPSSDPTNAETTASEAPRTRGSRRQIQRLEQLLALYVAEIRRLQEKELDLSELDDPDSTYLQEARLKRKLIRLFGRLCELKDCSSLTGRVIEQRIPYRGTRYPEVNRRIERLINKPGPDTFPDYGDVLRAVEKAAARHSLGLPRQQLQLMAQDAFRDVGIRLQERRHLDLIYNFGCHLTDDYRPGIDPALSDPALARRLRENRSLAMSRLDEVISKYAMMQDKSEEGERQKRRARLPQATSSHSTDPLKASLDSGEGPSGMASQECPTTSKPETDDEEDEESEEEEEEEEEEEEEEATDSEEEEDLEQMQEGQGDDEEEEEEEEEAGQDGDKSPMSPPRISTEKNLEPSKGISRSMGEQQNKEFTVSPSSEEPLAPSSIDAESNGENLEELLLEEESPISQLFELEIEALPLDTTPSPEERDISSSRKQSEEPLTTVLENGAAMVTSTSFNGGVSPHTWGDSCPPCKKSRKEKETGAEPLGNSYVERQRSVHEKNGRKIPTLPSPPSPLTSMAPVADSSTRVDSPSHGLVTSSLCSASQARLSQTPHSQPSRPGTYKMSVATQCDPEEIIVLSDSD</sequence>
<proteinExistence type="inferred from homology"/>
<organism>
    <name type="scientific">Canis lupus familiaris</name>
    <name type="common">Dog</name>
    <name type="synonym">Canis familiaris</name>
    <dbReference type="NCBI Taxonomy" id="9615"/>
    <lineage>
        <taxon>Eukaryota</taxon>
        <taxon>Metazoa</taxon>
        <taxon>Chordata</taxon>
        <taxon>Craniata</taxon>
        <taxon>Vertebrata</taxon>
        <taxon>Euteleostomi</taxon>
        <taxon>Mammalia</taxon>
        <taxon>Eutheria</taxon>
        <taxon>Laurasiatheria</taxon>
        <taxon>Carnivora</taxon>
        <taxon>Caniformia</taxon>
        <taxon>Canidae</taxon>
        <taxon>Canis</taxon>
    </lineage>
</organism>
<reference key="1">
    <citation type="journal article" date="2005" name="Genomics">
        <title>Genomic sequence of the class II region of the canine MHC: comparison with the MHC of other mammalian species.</title>
        <authorList>
            <person name="Debenham S.L."/>
            <person name="Hart E.A."/>
            <person name="Ashurst J.L."/>
            <person name="Howe K.L."/>
            <person name="Quail M.A."/>
            <person name="Ollier W.E.R."/>
            <person name="Binns M.M."/>
        </authorList>
    </citation>
    <scope>NUCLEOTIDE SEQUENCE [LARGE SCALE GENOMIC DNA]</scope>
    <source>
        <strain>Doberman pinscher</strain>
    </source>
</reference>